<protein>
    <recommendedName>
        <fullName evidence="1">Fructose-1,6-bisphosphatase class 3</fullName>
        <shortName evidence="1">FBPase class 3</shortName>
        <ecNumber evidence="1">3.1.3.11</ecNumber>
    </recommendedName>
    <alternativeName>
        <fullName evidence="1">D-fructose-1,6-bisphosphate 1-phosphohydrolase class 3</fullName>
    </alternativeName>
</protein>
<reference key="1">
    <citation type="journal article" date="2003" name="J. Bacteriol.">
        <title>Complete genome sequence of the oral pathogenic bacterium Porphyromonas gingivalis strain W83.</title>
        <authorList>
            <person name="Nelson K.E."/>
            <person name="Fleischmann R.D."/>
            <person name="DeBoy R.T."/>
            <person name="Paulsen I.T."/>
            <person name="Fouts D.E."/>
            <person name="Eisen J.A."/>
            <person name="Daugherty S.C."/>
            <person name="Dodson R.J."/>
            <person name="Durkin A.S."/>
            <person name="Gwinn M.L."/>
            <person name="Haft D.H."/>
            <person name="Kolonay J.F."/>
            <person name="Nelson W.C."/>
            <person name="Mason T.M."/>
            <person name="Tallon L."/>
            <person name="Gray J."/>
            <person name="Granger D."/>
            <person name="Tettelin H."/>
            <person name="Dong H."/>
            <person name="Galvin J.L."/>
            <person name="Duncan M.J."/>
            <person name="Dewhirst F.E."/>
            <person name="Fraser C.M."/>
        </authorList>
    </citation>
    <scope>NUCLEOTIDE SEQUENCE [LARGE SCALE GENOMIC DNA]</scope>
    <source>
        <strain>ATCC BAA-308 / W83</strain>
    </source>
</reference>
<evidence type="ECO:0000255" key="1">
    <source>
        <dbReference type="HAMAP-Rule" id="MF_01854"/>
    </source>
</evidence>
<organism>
    <name type="scientific">Porphyromonas gingivalis (strain ATCC BAA-308 / W83)</name>
    <dbReference type="NCBI Taxonomy" id="242619"/>
    <lineage>
        <taxon>Bacteria</taxon>
        <taxon>Pseudomonadati</taxon>
        <taxon>Bacteroidota</taxon>
        <taxon>Bacteroidia</taxon>
        <taxon>Bacteroidales</taxon>
        <taxon>Porphyromonadaceae</taxon>
        <taxon>Porphyromonas</taxon>
    </lineage>
</organism>
<gene>
    <name evidence="1" type="primary">fbp</name>
    <name type="ordered locus">PG_0793</name>
</gene>
<feature type="chain" id="PRO_0000363107" description="Fructose-1,6-bisphosphatase class 3">
    <location>
        <begin position="1"/>
        <end position="655"/>
    </location>
</feature>
<sequence>MLKHDLDYLELLSESFPTATEAATEIINLEAILNLPKGTEHFLADIHGEYEAFIHVLKNASGSIRRKVDEVFGGQLRQNQKRELCTLIYYPREKLELVKQSDERMEDWYMVTLNQLIKVCQKAAEKYTRSKVRKTLPPKYSYIIQELLHEDGVNPNKSAYISSIFSSIISTGCADDFIIAISETIQRLVIDHLHVVGDVFDRGPGAHIIMDTLMKYHHFDIQWGNHDMLWMGAAVGNASCMANVVRIALRYANLDTLESGYGINLLPLARFAMDTYADDPCTVFKPKLAQADQTYDDKSVYLISQMHKAISIIQFKLEHQIIARHPEYKMDNRDLFHLVNFTDGTIKLSSGVYPMLDMNFPTVDPADPYALTEQEQNIVDRLMGCFMRSEKLQNHLKCLYRHGSMYLTYNMNLLYHASIPLNKDKSLKKVRVGDKTYAGRELLDKVEEMIRTAYVAPEKSDQRLAAVDYMWYLWCGPDSPLFDKAMMTTFERYFIEDKATHHEEKGYYYVYRQEKAVCEMILKEFGLEGPDTHIINGHVPVKAKKGELPIGAEGKLMLIDGGFSKAYQSSTGIAGYTLIFNSQGLHLVQHEPFSSTRKAIEEMEDIKSITVVREVTSHRMLVKDTDNGHLLSKQVENLKKLLQAYSYGLIKERKK</sequence>
<keyword id="KW-0119">Carbohydrate metabolism</keyword>
<keyword id="KW-0378">Hydrolase</keyword>
<keyword id="KW-0464">Manganese</keyword>
<keyword id="KW-1185">Reference proteome</keyword>
<comment type="catalytic activity">
    <reaction evidence="1">
        <text>beta-D-fructose 1,6-bisphosphate + H2O = beta-D-fructose 6-phosphate + phosphate</text>
        <dbReference type="Rhea" id="RHEA:11064"/>
        <dbReference type="ChEBI" id="CHEBI:15377"/>
        <dbReference type="ChEBI" id="CHEBI:32966"/>
        <dbReference type="ChEBI" id="CHEBI:43474"/>
        <dbReference type="ChEBI" id="CHEBI:57634"/>
        <dbReference type="EC" id="3.1.3.11"/>
    </reaction>
</comment>
<comment type="cofactor">
    <cofactor evidence="1">
        <name>Mn(2+)</name>
        <dbReference type="ChEBI" id="CHEBI:29035"/>
    </cofactor>
</comment>
<comment type="pathway">
    <text evidence="1">Carbohydrate biosynthesis; gluconeogenesis.</text>
</comment>
<comment type="similarity">
    <text evidence="1">Belongs to the FBPase class 3 family.</text>
</comment>
<dbReference type="EC" id="3.1.3.11" evidence="1"/>
<dbReference type="EMBL" id="AE015924">
    <property type="protein sequence ID" value="AAQ65954.1"/>
    <property type="molecule type" value="Genomic_DNA"/>
</dbReference>
<dbReference type="RefSeq" id="WP_005873912.1">
    <property type="nucleotide sequence ID" value="NC_002950.2"/>
</dbReference>
<dbReference type="STRING" id="242619.PG_0793"/>
<dbReference type="EnsemblBacteria" id="AAQ65954">
    <property type="protein sequence ID" value="AAQ65954"/>
    <property type="gene ID" value="PG_0793"/>
</dbReference>
<dbReference type="KEGG" id="pgi:PG_0793"/>
<dbReference type="eggNOG" id="COG3855">
    <property type="taxonomic scope" value="Bacteria"/>
</dbReference>
<dbReference type="HOGENOM" id="CLU_028392_2_0_10"/>
<dbReference type="UniPathway" id="UPA00138"/>
<dbReference type="Proteomes" id="UP000000588">
    <property type="component" value="Chromosome"/>
</dbReference>
<dbReference type="GO" id="GO:0042132">
    <property type="term" value="F:fructose 1,6-bisphosphate 1-phosphatase activity"/>
    <property type="evidence" value="ECO:0007669"/>
    <property type="project" value="UniProtKB-UniRule"/>
</dbReference>
<dbReference type="GO" id="GO:0006094">
    <property type="term" value="P:gluconeogenesis"/>
    <property type="evidence" value="ECO:0007669"/>
    <property type="project" value="UniProtKB-UniRule"/>
</dbReference>
<dbReference type="HAMAP" id="MF_01854">
    <property type="entry name" value="FBPase_class3"/>
    <property type="match status" value="1"/>
</dbReference>
<dbReference type="InterPro" id="IPR009164">
    <property type="entry name" value="FBPtase_class3"/>
</dbReference>
<dbReference type="InterPro" id="IPR029052">
    <property type="entry name" value="Metallo-depent_PP-like"/>
</dbReference>
<dbReference type="Pfam" id="PF06874">
    <property type="entry name" value="FBPase_2"/>
    <property type="match status" value="1"/>
</dbReference>
<dbReference type="PIRSF" id="PIRSF000906">
    <property type="entry name" value="FBPtase_Bacill"/>
    <property type="match status" value="1"/>
</dbReference>
<dbReference type="SUPFAM" id="SSF56300">
    <property type="entry name" value="Metallo-dependent phosphatases"/>
    <property type="match status" value="1"/>
</dbReference>
<name>F16PC_PORGI</name>
<proteinExistence type="inferred from homology"/>
<accession>Q7MW52</accession>